<keyword id="KW-0028">Amino-acid biosynthesis</keyword>
<keyword id="KW-0963">Cytoplasm</keyword>
<keyword id="KW-0413">Isomerase</keyword>
<keyword id="KW-0457">Lysine biosynthesis</keyword>
<keyword id="KW-1185">Reference proteome</keyword>
<evidence type="ECO:0000255" key="1">
    <source>
        <dbReference type="HAMAP-Rule" id="MF_00197"/>
    </source>
</evidence>
<sequence>MLVMLQFSKYQGLGNDFLLIDGREDQLTQQVINPDPAWVRKICDRHFGIGADGLILALPPRADGDLRMQIFNADGSLAEMCGNGIRCLTRFLADIEGDLCVQRWNIETLAGIICPVLQEDGQICVDMGTPFLDPESIPTTLTIGSAGLPQGECHLGSTSLHVAAVGMGNPHLIVPVEDLENIPFENWGQRLEKHHAFPAKTNVHFLKIHSPNQLEIRVWERGSGPTLACGTGACASLVATCLLGLSDDHAEVLLPGGVLQISWPGRRGSVFMTGPAEPIFDGVLTPLLSPSHAEVLPQDDQII</sequence>
<accession>Q7V7M5</accession>
<organism>
    <name type="scientific">Prochlorococcus marinus (strain MIT 9313)</name>
    <dbReference type="NCBI Taxonomy" id="74547"/>
    <lineage>
        <taxon>Bacteria</taxon>
        <taxon>Bacillati</taxon>
        <taxon>Cyanobacteriota</taxon>
        <taxon>Cyanophyceae</taxon>
        <taxon>Synechococcales</taxon>
        <taxon>Prochlorococcaceae</taxon>
        <taxon>Prochlorococcus</taxon>
    </lineage>
</organism>
<protein>
    <recommendedName>
        <fullName evidence="1">Diaminopimelate epimerase</fullName>
        <shortName evidence="1">DAP epimerase</shortName>
        <ecNumber evidence="1">5.1.1.7</ecNumber>
    </recommendedName>
    <alternativeName>
        <fullName evidence="1">PLP-independent amino acid racemase</fullName>
    </alternativeName>
</protein>
<dbReference type="EC" id="5.1.1.7" evidence="1"/>
<dbReference type="EMBL" id="BX548175">
    <property type="protein sequence ID" value="CAE20891.1"/>
    <property type="molecule type" value="Genomic_DNA"/>
</dbReference>
<dbReference type="RefSeq" id="WP_011130094.1">
    <property type="nucleotide sequence ID" value="NC_005071.1"/>
</dbReference>
<dbReference type="SMR" id="Q7V7M5"/>
<dbReference type="KEGG" id="pmt:PMT_0716"/>
<dbReference type="eggNOG" id="COG0253">
    <property type="taxonomic scope" value="Bacteria"/>
</dbReference>
<dbReference type="HOGENOM" id="CLU_053306_3_0_3"/>
<dbReference type="OrthoDB" id="9805408at2"/>
<dbReference type="UniPathway" id="UPA00034">
    <property type="reaction ID" value="UER00025"/>
</dbReference>
<dbReference type="Proteomes" id="UP000001423">
    <property type="component" value="Chromosome"/>
</dbReference>
<dbReference type="GO" id="GO:0005829">
    <property type="term" value="C:cytosol"/>
    <property type="evidence" value="ECO:0007669"/>
    <property type="project" value="TreeGrafter"/>
</dbReference>
<dbReference type="GO" id="GO:0008837">
    <property type="term" value="F:diaminopimelate epimerase activity"/>
    <property type="evidence" value="ECO:0007669"/>
    <property type="project" value="UniProtKB-UniRule"/>
</dbReference>
<dbReference type="GO" id="GO:0009089">
    <property type="term" value="P:lysine biosynthetic process via diaminopimelate"/>
    <property type="evidence" value="ECO:0007669"/>
    <property type="project" value="UniProtKB-UniRule"/>
</dbReference>
<dbReference type="Gene3D" id="3.10.310.10">
    <property type="entry name" value="Diaminopimelate Epimerase, Chain A, domain 1"/>
    <property type="match status" value="2"/>
</dbReference>
<dbReference type="HAMAP" id="MF_00197">
    <property type="entry name" value="DAP_epimerase"/>
    <property type="match status" value="1"/>
</dbReference>
<dbReference type="InterPro" id="IPR018510">
    <property type="entry name" value="DAP_epimerase_AS"/>
</dbReference>
<dbReference type="InterPro" id="IPR001653">
    <property type="entry name" value="DAP_epimerase_DapF"/>
</dbReference>
<dbReference type="NCBIfam" id="TIGR00652">
    <property type="entry name" value="DapF"/>
    <property type="match status" value="1"/>
</dbReference>
<dbReference type="PANTHER" id="PTHR31689:SF0">
    <property type="entry name" value="DIAMINOPIMELATE EPIMERASE"/>
    <property type="match status" value="1"/>
</dbReference>
<dbReference type="PANTHER" id="PTHR31689">
    <property type="entry name" value="DIAMINOPIMELATE EPIMERASE, CHLOROPLASTIC"/>
    <property type="match status" value="1"/>
</dbReference>
<dbReference type="Pfam" id="PF01678">
    <property type="entry name" value="DAP_epimerase"/>
    <property type="match status" value="2"/>
</dbReference>
<dbReference type="SUPFAM" id="SSF54506">
    <property type="entry name" value="Diaminopimelate epimerase-like"/>
    <property type="match status" value="2"/>
</dbReference>
<dbReference type="PROSITE" id="PS01326">
    <property type="entry name" value="DAP_EPIMERASE"/>
    <property type="match status" value="1"/>
</dbReference>
<gene>
    <name evidence="1" type="primary">dapF</name>
    <name type="ordered locus">PMT_0716</name>
</gene>
<proteinExistence type="inferred from homology"/>
<feature type="chain" id="PRO_1000077701" description="Diaminopimelate epimerase">
    <location>
        <begin position="1"/>
        <end position="303"/>
    </location>
</feature>
<feature type="active site" description="Proton donor" evidence="1">
    <location>
        <position position="81"/>
    </location>
</feature>
<feature type="active site" description="Proton acceptor" evidence="1">
    <location>
        <position position="229"/>
    </location>
</feature>
<feature type="binding site" evidence="1">
    <location>
        <position position="15"/>
    </location>
    <ligand>
        <name>substrate</name>
    </ligand>
</feature>
<feature type="binding site" evidence="1">
    <location>
        <position position="72"/>
    </location>
    <ligand>
        <name>substrate</name>
    </ligand>
</feature>
<feature type="binding site" evidence="1">
    <location>
        <begin position="82"/>
        <end position="83"/>
    </location>
    <ligand>
        <name>substrate</name>
    </ligand>
</feature>
<feature type="binding site" evidence="1">
    <location>
        <position position="169"/>
    </location>
    <ligand>
        <name>substrate</name>
    </ligand>
</feature>
<feature type="binding site" evidence="1">
    <location>
        <position position="202"/>
    </location>
    <ligand>
        <name>substrate</name>
    </ligand>
</feature>
<feature type="binding site" evidence="1">
    <location>
        <begin position="220"/>
        <end position="221"/>
    </location>
    <ligand>
        <name>substrate</name>
    </ligand>
</feature>
<feature type="binding site" evidence="1">
    <location>
        <begin position="230"/>
        <end position="231"/>
    </location>
    <ligand>
        <name>substrate</name>
    </ligand>
</feature>
<feature type="site" description="Could be important to modulate the pK values of the two catalytic cysteine residues" evidence="1">
    <location>
        <position position="171"/>
    </location>
</feature>
<feature type="site" description="Could be important to modulate the pK values of the two catalytic cysteine residues" evidence="1">
    <location>
        <position position="220"/>
    </location>
</feature>
<reference key="1">
    <citation type="journal article" date="2003" name="Nature">
        <title>Genome divergence in two Prochlorococcus ecotypes reflects oceanic niche differentiation.</title>
        <authorList>
            <person name="Rocap G."/>
            <person name="Larimer F.W."/>
            <person name="Lamerdin J.E."/>
            <person name="Malfatti S."/>
            <person name="Chain P."/>
            <person name="Ahlgren N.A."/>
            <person name="Arellano A."/>
            <person name="Coleman M."/>
            <person name="Hauser L."/>
            <person name="Hess W.R."/>
            <person name="Johnson Z.I."/>
            <person name="Land M.L."/>
            <person name="Lindell D."/>
            <person name="Post A.F."/>
            <person name="Regala W."/>
            <person name="Shah M."/>
            <person name="Shaw S.L."/>
            <person name="Steglich C."/>
            <person name="Sullivan M.B."/>
            <person name="Ting C.S."/>
            <person name="Tolonen A."/>
            <person name="Webb E.A."/>
            <person name="Zinser E.R."/>
            <person name="Chisholm S.W."/>
        </authorList>
    </citation>
    <scope>NUCLEOTIDE SEQUENCE [LARGE SCALE GENOMIC DNA]</scope>
    <source>
        <strain>MIT 9313</strain>
    </source>
</reference>
<comment type="function">
    <text evidence="1">Catalyzes the stereoinversion of LL-2,6-diaminopimelate (L,L-DAP) to meso-diaminopimelate (meso-DAP), a precursor of L-lysine and an essential component of the bacterial peptidoglycan.</text>
</comment>
<comment type="catalytic activity">
    <reaction evidence="1">
        <text>(2S,6S)-2,6-diaminopimelate = meso-2,6-diaminopimelate</text>
        <dbReference type="Rhea" id="RHEA:15393"/>
        <dbReference type="ChEBI" id="CHEBI:57609"/>
        <dbReference type="ChEBI" id="CHEBI:57791"/>
        <dbReference type="EC" id="5.1.1.7"/>
    </reaction>
</comment>
<comment type="pathway">
    <text evidence="1">Amino-acid biosynthesis; L-lysine biosynthesis via DAP pathway; DL-2,6-diaminopimelate from LL-2,6-diaminopimelate: step 1/1.</text>
</comment>
<comment type="subunit">
    <text evidence="1">Homodimer.</text>
</comment>
<comment type="subcellular location">
    <subcellularLocation>
        <location evidence="1">Cytoplasm</location>
    </subcellularLocation>
</comment>
<comment type="similarity">
    <text evidence="1">Belongs to the diaminopimelate epimerase family.</text>
</comment>
<name>DAPF_PROMM</name>